<feature type="signal peptide" evidence="1">
    <location>
        <begin position="1"/>
        <end position="37"/>
    </location>
</feature>
<feature type="chain" id="PRO_0000017842" description="Serine hydrolase BPHL">
    <location>
        <begin position="38"/>
        <end position="291"/>
    </location>
</feature>
<feature type="domain" description="AB hydrolase-1" evidence="3">
    <location>
        <begin position="62"/>
        <end position="173"/>
    </location>
</feature>
<feature type="active site" description="Nucleophile" evidence="2">
    <location>
        <position position="139"/>
    </location>
</feature>
<feature type="active site" description="Charge relay system" evidence="4">
    <location>
        <position position="244"/>
    </location>
</feature>
<feature type="active site" description="Charge relay system" evidence="4">
    <location>
        <position position="272"/>
    </location>
</feature>
<feature type="binding site" evidence="2">
    <location>
        <position position="221"/>
    </location>
    <ligand>
        <name>Mg(2+)</name>
        <dbReference type="ChEBI" id="CHEBI:18420"/>
    </ligand>
</feature>
<feature type="site" description="Binding of alpha-amino group of substrate" evidence="2">
    <location>
        <position position="140"/>
    </location>
</feature>
<feature type="modified residue" description="N6-acetyllysine; alternate" evidence="7">
    <location>
        <position position="74"/>
    </location>
</feature>
<feature type="modified residue" description="N6-succinyllysine; alternate" evidence="8">
    <location>
        <position position="74"/>
    </location>
</feature>
<feature type="modified residue" description="N6-acetyllysine" evidence="7">
    <location>
        <position position="86"/>
    </location>
</feature>
<feature type="modified residue" description="N6-acetyllysine" evidence="7">
    <location>
        <position position="119"/>
    </location>
</feature>
<feature type="modified residue" description="N6-acetyllysine; alternate" evidence="7">
    <location>
        <position position="126"/>
    </location>
</feature>
<feature type="modified residue" description="N6-succinyllysine; alternate" evidence="8">
    <location>
        <position position="126"/>
    </location>
</feature>
<feature type="modified residue" description="N6-succinyllysine" evidence="8">
    <location>
        <position position="184"/>
    </location>
</feature>
<feature type="modified residue" description="N6-acetyllysine; alternate" evidence="7">
    <location>
        <position position="191"/>
    </location>
</feature>
<feature type="modified residue" description="N6-succinyllysine; alternate" evidence="8">
    <location>
        <position position="191"/>
    </location>
</feature>
<feature type="modified residue" description="N6-acetyllysine" evidence="7">
    <location>
        <position position="217"/>
    </location>
</feature>
<feature type="modified residue" description="N6-acetyllysine" evidence="7">
    <location>
        <position position="243"/>
    </location>
</feature>
<feature type="modified residue" description="N6-acetyllysine; alternate" evidence="7">
    <location>
        <position position="260"/>
    </location>
</feature>
<feature type="modified residue" description="N6-succinyllysine; alternate" evidence="8">
    <location>
        <position position="260"/>
    </location>
</feature>
<feature type="modified residue" description="N6-acetyllysine; alternate" evidence="7">
    <location>
        <position position="271"/>
    </location>
</feature>
<feature type="modified residue" description="N6-succinyllysine; alternate" evidence="8">
    <location>
        <position position="271"/>
    </location>
</feature>
<feature type="sequence conflict" description="In Ref. 2; AAH23146." evidence="6" ref="2">
    <original>A</original>
    <variation>V</variation>
    <location>
        <position position="62"/>
    </location>
</feature>
<feature type="sequence conflict" description="In Ref. 1; BAB22447." evidence="6" ref="1">
    <original>QL</original>
    <variation>HC</variation>
    <location>
        <begin position="218"/>
        <end position="219"/>
    </location>
</feature>
<feature type="sequence conflict" description="In Ref. 1; BAB22447." evidence="6" ref="1">
    <original>L</original>
    <variation>F</variation>
    <location>
        <position position="290"/>
    </location>
</feature>
<comment type="function">
    <text evidence="2">Specific alpha-amino acid ester serine hydrolase that prefers small, hydrophobic, and aromatic side chains and does not have a stringent requirement for the leaving group other than preferring a primary alcohol. Has homocysteine-thiolactonase activity (in vitro) and may play a significant role in the detoxification of homocysteine thiolactone in vivo. Catalyzes the hydrolytic activation of amino acid ester prodrugs of nucleoside analogs such as valacyclovir and valganciclovir, converting them into their active forms (acyclovir and ganciclovir).</text>
</comment>
<comment type="catalytic activity">
    <reaction evidence="2">
        <text>L-homocysteine thiolactone + H2O = L-homocysteine + H(+)</text>
        <dbReference type="Rhea" id="RHEA:83867"/>
        <dbReference type="ChEBI" id="CHEBI:15377"/>
        <dbReference type="ChEBI" id="CHEBI:15378"/>
        <dbReference type="ChEBI" id="CHEBI:58199"/>
        <dbReference type="ChEBI" id="CHEBI:233452"/>
    </reaction>
    <physiologicalReaction direction="left-to-right" evidence="2">
        <dbReference type="Rhea" id="RHEA:83868"/>
    </physiologicalReaction>
</comment>
<comment type="catalytic activity">
    <reaction evidence="2">
        <text>valacyclovir + H2O = acyclovir + L-valine + H(+)</text>
        <dbReference type="Rhea" id="RHEA:83871"/>
        <dbReference type="ChEBI" id="CHEBI:2453"/>
        <dbReference type="ChEBI" id="CHEBI:15377"/>
        <dbReference type="ChEBI" id="CHEBI:15378"/>
        <dbReference type="ChEBI" id="CHEBI:57762"/>
        <dbReference type="ChEBI" id="CHEBI:233453"/>
    </reaction>
    <physiologicalReaction direction="left-to-right" evidence="2">
        <dbReference type="Rhea" id="RHEA:83872"/>
    </physiologicalReaction>
</comment>
<comment type="subunit">
    <text evidence="2">Monomer. May also form homodimers.</text>
</comment>
<comment type="subcellular location">
    <subcellularLocation>
        <location evidence="2">Mitochondrion</location>
    </subcellularLocation>
</comment>
<comment type="disruption phenotype">
    <text evidence="5">No obvious phenotype is observed for Bphl knockout mice. Valacyclovir is rapidly and efficiently hydrolyzed to acyclovir in vivo in the absence of Bphl.</text>
</comment>
<comment type="similarity">
    <text evidence="6">Belongs to the AB hydrolase superfamily. Lipase family.</text>
</comment>
<comment type="sequence caution" evidence="6">
    <conflict type="erroneous initiation">
        <sequence resource="EMBL-CDS" id="BAC37185"/>
    </conflict>
</comment>
<protein>
    <recommendedName>
        <fullName>Serine hydrolase BPHL</fullName>
        <ecNumber evidence="2">3.1.-.-</ecNumber>
    </recommendedName>
    <alternativeName>
        <fullName>Biphenyl hydrolase-like protein</fullName>
    </alternativeName>
    <alternativeName>
        <fullName>L-homocysteine-thiolactonase BPHL</fullName>
    </alternativeName>
    <alternativeName>
        <fullName>Valacyclovir hydrolase</fullName>
        <shortName>VACVase</shortName>
        <shortName>Valacyclovirase</shortName>
    </alternativeName>
</protein>
<evidence type="ECO:0000250" key="1"/>
<evidence type="ECO:0000250" key="2">
    <source>
        <dbReference type="UniProtKB" id="Q86WA6"/>
    </source>
</evidence>
<evidence type="ECO:0000255" key="3"/>
<evidence type="ECO:0000255" key="4">
    <source>
        <dbReference type="PROSITE-ProRule" id="PRU10037"/>
    </source>
</evidence>
<evidence type="ECO:0000269" key="5">
    <source>
    </source>
</evidence>
<evidence type="ECO:0000305" key="6"/>
<evidence type="ECO:0007744" key="7">
    <source>
    </source>
</evidence>
<evidence type="ECO:0007744" key="8">
    <source>
    </source>
</evidence>
<sequence>MATATVRPAAQRLRLLLSPLKSRICVPQAEPVATFGTAVTSAKVAVNGVHLHYQRVGEGEHAILLLPGMLGSGKTDFAPQLQSLNKKRFTLVAWDPRGYGYSRPPDRDFPRDFFERDAKDAVDLMKALQFKQVSLLGWSDGGITALIAAAKYPSYIRKMVIWGANAYVTEEDSRIYQGIRDVSKWSEKARKPLEALYGYDYLAKTCEDWVDGISQFKQLPEGNICRHLLPLVQCPTLIVHGEKDPLVPRFHADFLLQHVKGSRLHLMPEGKHNLHLRFADEFNRLVEDFLQ</sequence>
<proteinExistence type="evidence at protein level"/>
<keyword id="KW-0007">Acetylation</keyword>
<keyword id="KW-0378">Hydrolase</keyword>
<keyword id="KW-0460">Magnesium</keyword>
<keyword id="KW-0479">Metal-binding</keyword>
<keyword id="KW-0496">Mitochondrion</keyword>
<keyword id="KW-1185">Reference proteome</keyword>
<keyword id="KW-0732">Signal</keyword>
<gene>
    <name type="primary">Bphl</name>
</gene>
<accession>Q8R164</accession>
<accession>Q8BVH2</accession>
<accession>Q8R589</accession>
<accession>Q9DCC6</accession>
<reference key="1">
    <citation type="journal article" date="2005" name="Science">
        <title>The transcriptional landscape of the mammalian genome.</title>
        <authorList>
            <person name="Carninci P."/>
            <person name="Kasukawa T."/>
            <person name="Katayama S."/>
            <person name="Gough J."/>
            <person name="Frith M.C."/>
            <person name="Maeda N."/>
            <person name="Oyama R."/>
            <person name="Ravasi T."/>
            <person name="Lenhard B."/>
            <person name="Wells C."/>
            <person name="Kodzius R."/>
            <person name="Shimokawa K."/>
            <person name="Bajic V.B."/>
            <person name="Brenner S.E."/>
            <person name="Batalov S."/>
            <person name="Forrest A.R."/>
            <person name="Zavolan M."/>
            <person name="Davis M.J."/>
            <person name="Wilming L.G."/>
            <person name="Aidinis V."/>
            <person name="Allen J.E."/>
            <person name="Ambesi-Impiombato A."/>
            <person name="Apweiler R."/>
            <person name="Aturaliya R.N."/>
            <person name="Bailey T.L."/>
            <person name="Bansal M."/>
            <person name="Baxter L."/>
            <person name="Beisel K.W."/>
            <person name="Bersano T."/>
            <person name="Bono H."/>
            <person name="Chalk A.M."/>
            <person name="Chiu K.P."/>
            <person name="Choudhary V."/>
            <person name="Christoffels A."/>
            <person name="Clutterbuck D.R."/>
            <person name="Crowe M.L."/>
            <person name="Dalla E."/>
            <person name="Dalrymple B.P."/>
            <person name="de Bono B."/>
            <person name="Della Gatta G."/>
            <person name="di Bernardo D."/>
            <person name="Down T."/>
            <person name="Engstrom P."/>
            <person name="Fagiolini M."/>
            <person name="Faulkner G."/>
            <person name="Fletcher C.F."/>
            <person name="Fukushima T."/>
            <person name="Furuno M."/>
            <person name="Futaki S."/>
            <person name="Gariboldi M."/>
            <person name="Georgii-Hemming P."/>
            <person name="Gingeras T.R."/>
            <person name="Gojobori T."/>
            <person name="Green R.E."/>
            <person name="Gustincich S."/>
            <person name="Harbers M."/>
            <person name="Hayashi Y."/>
            <person name="Hensch T.K."/>
            <person name="Hirokawa N."/>
            <person name="Hill D."/>
            <person name="Huminiecki L."/>
            <person name="Iacono M."/>
            <person name="Ikeo K."/>
            <person name="Iwama A."/>
            <person name="Ishikawa T."/>
            <person name="Jakt M."/>
            <person name="Kanapin A."/>
            <person name="Katoh M."/>
            <person name="Kawasawa Y."/>
            <person name="Kelso J."/>
            <person name="Kitamura H."/>
            <person name="Kitano H."/>
            <person name="Kollias G."/>
            <person name="Krishnan S.P."/>
            <person name="Kruger A."/>
            <person name="Kummerfeld S.K."/>
            <person name="Kurochkin I.V."/>
            <person name="Lareau L.F."/>
            <person name="Lazarevic D."/>
            <person name="Lipovich L."/>
            <person name="Liu J."/>
            <person name="Liuni S."/>
            <person name="McWilliam S."/>
            <person name="Madan Babu M."/>
            <person name="Madera M."/>
            <person name="Marchionni L."/>
            <person name="Matsuda H."/>
            <person name="Matsuzawa S."/>
            <person name="Miki H."/>
            <person name="Mignone F."/>
            <person name="Miyake S."/>
            <person name="Morris K."/>
            <person name="Mottagui-Tabar S."/>
            <person name="Mulder N."/>
            <person name="Nakano N."/>
            <person name="Nakauchi H."/>
            <person name="Ng P."/>
            <person name="Nilsson R."/>
            <person name="Nishiguchi S."/>
            <person name="Nishikawa S."/>
            <person name="Nori F."/>
            <person name="Ohara O."/>
            <person name="Okazaki Y."/>
            <person name="Orlando V."/>
            <person name="Pang K.C."/>
            <person name="Pavan W.J."/>
            <person name="Pavesi G."/>
            <person name="Pesole G."/>
            <person name="Petrovsky N."/>
            <person name="Piazza S."/>
            <person name="Reed J."/>
            <person name="Reid J.F."/>
            <person name="Ring B.Z."/>
            <person name="Ringwald M."/>
            <person name="Rost B."/>
            <person name="Ruan Y."/>
            <person name="Salzberg S.L."/>
            <person name="Sandelin A."/>
            <person name="Schneider C."/>
            <person name="Schoenbach C."/>
            <person name="Sekiguchi K."/>
            <person name="Semple C.A."/>
            <person name="Seno S."/>
            <person name="Sessa L."/>
            <person name="Sheng Y."/>
            <person name="Shibata Y."/>
            <person name="Shimada H."/>
            <person name="Shimada K."/>
            <person name="Silva D."/>
            <person name="Sinclair B."/>
            <person name="Sperling S."/>
            <person name="Stupka E."/>
            <person name="Sugiura K."/>
            <person name="Sultana R."/>
            <person name="Takenaka Y."/>
            <person name="Taki K."/>
            <person name="Tammoja K."/>
            <person name="Tan S.L."/>
            <person name="Tang S."/>
            <person name="Taylor M.S."/>
            <person name="Tegner J."/>
            <person name="Teichmann S.A."/>
            <person name="Ueda H.R."/>
            <person name="van Nimwegen E."/>
            <person name="Verardo R."/>
            <person name="Wei C.L."/>
            <person name="Yagi K."/>
            <person name="Yamanishi H."/>
            <person name="Zabarovsky E."/>
            <person name="Zhu S."/>
            <person name="Zimmer A."/>
            <person name="Hide W."/>
            <person name="Bult C."/>
            <person name="Grimmond S.M."/>
            <person name="Teasdale R.D."/>
            <person name="Liu E.T."/>
            <person name="Brusic V."/>
            <person name="Quackenbush J."/>
            <person name="Wahlestedt C."/>
            <person name="Mattick J.S."/>
            <person name="Hume D.A."/>
            <person name="Kai C."/>
            <person name="Sasaki D."/>
            <person name="Tomaru Y."/>
            <person name="Fukuda S."/>
            <person name="Kanamori-Katayama M."/>
            <person name="Suzuki M."/>
            <person name="Aoki J."/>
            <person name="Arakawa T."/>
            <person name="Iida J."/>
            <person name="Imamura K."/>
            <person name="Itoh M."/>
            <person name="Kato T."/>
            <person name="Kawaji H."/>
            <person name="Kawagashira N."/>
            <person name="Kawashima T."/>
            <person name="Kojima M."/>
            <person name="Kondo S."/>
            <person name="Konno H."/>
            <person name="Nakano K."/>
            <person name="Ninomiya N."/>
            <person name="Nishio T."/>
            <person name="Okada M."/>
            <person name="Plessy C."/>
            <person name="Shibata K."/>
            <person name="Shiraki T."/>
            <person name="Suzuki S."/>
            <person name="Tagami M."/>
            <person name="Waki K."/>
            <person name="Watahiki A."/>
            <person name="Okamura-Oho Y."/>
            <person name="Suzuki H."/>
            <person name="Kawai J."/>
            <person name="Hayashizaki Y."/>
        </authorList>
    </citation>
    <scope>NUCLEOTIDE SEQUENCE [LARGE SCALE MRNA]</scope>
    <source>
        <strain>C57BL/6J</strain>
        <tissue>Olfactory bulb</tissue>
    </source>
</reference>
<reference key="2">
    <citation type="journal article" date="2004" name="Genome Res.">
        <title>The status, quality, and expansion of the NIH full-length cDNA project: the Mammalian Gene Collection (MGC).</title>
        <authorList>
            <consortium name="The MGC Project Team"/>
        </authorList>
    </citation>
    <scope>NUCLEOTIDE SEQUENCE [LARGE SCALE MRNA]</scope>
    <source>
        <tissue>Salivary gland</tissue>
    </source>
</reference>
<reference key="3">
    <citation type="journal article" date="2010" name="Cell">
        <title>A tissue-specific atlas of mouse protein phosphorylation and expression.</title>
        <authorList>
            <person name="Huttlin E.L."/>
            <person name="Jedrychowski M.P."/>
            <person name="Elias J.E."/>
            <person name="Goswami T."/>
            <person name="Rad R."/>
            <person name="Beausoleil S.A."/>
            <person name="Villen J."/>
            <person name="Haas W."/>
            <person name="Sowa M.E."/>
            <person name="Gygi S.P."/>
        </authorList>
    </citation>
    <scope>IDENTIFICATION BY MASS SPECTROMETRY [LARGE SCALE ANALYSIS]</scope>
    <source>
        <tissue>Brain</tissue>
        <tissue>Brown adipose tissue</tissue>
        <tissue>Heart</tissue>
        <tissue>Kidney</tissue>
        <tissue>Liver</tissue>
        <tissue>Lung</tissue>
        <tissue>Pancreas</tissue>
        <tissue>Spleen</tissue>
        <tissue>Testis</tissue>
    </source>
</reference>
<reference key="4">
    <citation type="journal article" date="2013" name="Mol. Cell">
        <title>SIRT5-mediated lysine desuccinylation impacts diverse metabolic pathways.</title>
        <authorList>
            <person name="Park J."/>
            <person name="Chen Y."/>
            <person name="Tishkoff D.X."/>
            <person name="Peng C."/>
            <person name="Tan M."/>
            <person name="Dai L."/>
            <person name="Xie Z."/>
            <person name="Zhang Y."/>
            <person name="Zwaans B.M."/>
            <person name="Skinner M.E."/>
            <person name="Lombard D.B."/>
            <person name="Zhao Y."/>
        </authorList>
    </citation>
    <scope>SUCCINYLATION [LARGE SCALE ANALYSIS] AT LYS-74; LYS-126; LYS-184; LYS-191; LYS-260 AND LYS-271</scope>
    <scope>IDENTIFICATION BY MASS SPECTROMETRY [LARGE SCALE ANALYSIS]</scope>
    <source>
        <tissue>Embryonic fibroblast</tissue>
        <tissue>Liver</tissue>
    </source>
</reference>
<reference key="5">
    <citation type="journal article" date="2013" name="Proc. Natl. Acad. Sci. U.S.A.">
        <title>Label-free quantitative proteomics of the lysine acetylome in mitochondria identifies substrates of SIRT3 in metabolic pathways.</title>
        <authorList>
            <person name="Rardin M.J."/>
            <person name="Newman J.C."/>
            <person name="Held J.M."/>
            <person name="Cusack M.P."/>
            <person name="Sorensen D.J."/>
            <person name="Li B."/>
            <person name="Schilling B."/>
            <person name="Mooney S.D."/>
            <person name="Kahn C.R."/>
            <person name="Verdin E."/>
            <person name="Gibson B.W."/>
        </authorList>
    </citation>
    <scope>ACETYLATION [LARGE SCALE ANALYSIS] AT LYS-74; LYS-86; LYS-119; LYS-126; LYS-191; LYS-217; LYS-243; LYS-260 AND LYS-271</scope>
    <scope>IDENTIFICATION BY MASS SPECTROMETRY [LARGE SCALE ANALYSIS]</scope>
    <source>
        <tissue>Liver</tissue>
    </source>
</reference>
<reference key="6">
    <citation type="journal article" date="2018" name="Biochem. Pharmacol.">
        <title>Effect of biphenyl hydrolase-like (BPHL) gene disruption on the intestinal stability, permeability and absorption of valacyclovir in wildtype and Bphl knockout mice.</title>
        <authorList>
            <person name="Hu Y."/>
            <person name="Epling D."/>
            <person name="Shi J."/>
            <person name="Song F."/>
            <person name="Tsume Y."/>
            <person name="Zhu H.J."/>
            <person name="Amidon G.L."/>
            <person name="Smith D.E."/>
        </authorList>
    </citation>
    <scope>DISRUPTION PHENOTYPE</scope>
</reference>
<organism>
    <name type="scientific">Mus musculus</name>
    <name type="common">Mouse</name>
    <dbReference type="NCBI Taxonomy" id="10090"/>
    <lineage>
        <taxon>Eukaryota</taxon>
        <taxon>Metazoa</taxon>
        <taxon>Chordata</taxon>
        <taxon>Craniata</taxon>
        <taxon>Vertebrata</taxon>
        <taxon>Euteleostomi</taxon>
        <taxon>Mammalia</taxon>
        <taxon>Eutheria</taxon>
        <taxon>Euarchontoglires</taxon>
        <taxon>Glires</taxon>
        <taxon>Rodentia</taxon>
        <taxon>Myomorpha</taxon>
        <taxon>Muroidea</taxon>
        <taxon>Muridae</taxon>
        <taxon>Murinae</taxon>
        <taxon>Mus</taxon>
        <taxon>Mus</taxon>
    </lineage>
</organism>
<dbReference type="EC" id="3.1.-.-" evidence="2"/>
<dbReference type="EMBL" id="AK002907">
    <property type="protein sequence ID" value="BAB22447.1"/>
    <property type="molecule type" value="mRNA"/>
</dbReference>
<dbReference type="EMBL" id="AK078232">
    <property type="protein sequence ID" value="BAC37185.1"/>
    <property type="status" value="ALT_INIT"/>
    <property type="molecule type" value="mRNA"/>
</dbReference>
<dbReference type="EMBL" id="BC025162">
    <property type="protein sequence ID" value="AAH25162.1"/>
    <property type="molecule type" value="mRNA"/>
</dbReference>
<dbReference type="EMBL" id="BC023146">
    <property type="protein sequence ID" value="AAH23146.1"/>
    <property type="molecule type" value="mRNA"/>
</dbReference>
<dbReference type="CCDS" id="CCDS49229.1"/>
<dbReference type="RefSeq" id="NP_080788.1">
    <property type="nucleotide sequence ID" value="NM_026512.2"/>
</dbReference>
<dbReference type="SMR" id="Q8R164"/>
<dbReference type="BioGRID" id="212602">
    <property type="interactions" value="2"/>
</dbReference>
<dbReference type="FunCoup" id="Q8R164">
    <property type="interactions" value="1028"/>
</dbReference>
<dbReference type="STRING" id="10090.ENSMUSP00000046168"/>
<dbReference type="ESTHER" id="mouse-bphl">
    <property type="family name" value="Valacyclovir-hydrolase"/>
</dbReference>
<dbReference type="MEROPS" id="S33.982"/>
<dbReference type="GlyGen" id="Q8R164">
    <property type="glycosylation" value="1 site, 1 O-linked glycan (1 site)"/>
</dbReference>
<dbReference type="iPTMnet" id="Q8R164"/>
<dbReference type="PhosphoSitePlus" id="Q8R164"/>
<dbReference type="SwissPalm" id="Q8R164"/>
<dbReference type="jPOST" id="Q8R164"/>
<dbReference type="PaxDb" id="10090-ENSMUSP00000046168"/>
<dbReference type="ProteomicsDB" id="265226"/>
<dbReference type="Pumba" id="Q8R164"/>
<dbReference type="Antibodypedia" id="24354">
    <property type="antibodies" value="129 antibodies from 23 providers"/>
</dbReference>
<dbReference type="DNASU" id="68021"/>
<dbReference type="Ensembl" id="ENSMUST00000040656.8">
    <property type="protein sequence ID" value="ENSMUSP00000046168.7"/>
    <property type="gene ID" value="ENSMUSG00000038286.12"/>
</dbReference>
<dbReference type="GeneID" id="68021"/>
<dbReference type="KEGG" id="mmu:68021"/>
<dbReference type="UCSC" id="uc007qaz.1">
    <property type="organism name" value="mouse"/>
</dbReference>
<dbReference type="AGR" id="MGI:1915271"/>
<dbReference type="CTD" id="670"/>
<dbReference type="MGI" id="MGI:1915271">
    <property type="gene designation" value="Bphl"/>
</dbReference>
<dbReference type="VEuPathDB" id="HostDB:ENSMUSG00000038286"/>
<dbReference type="eggNOG" id="KOG2984">
    <property type="taxonomic scope" value="Eukaryota"/>
</dbReference>
<dbReference type="GeneTree" id="ENSGT00390000004746"/>
<dbReference type="HOGENOM" id="CLU_020336_50_5_1"/>
<dbReference type="InParanoid" id="Q8R164"/>
<dbReference type="OMA" id="RFPQLWA"/>
<dbReference type="OrthoDB" id="19657at2759"/>
<dbReference type="PhylomeDB" id="Q8R164"/>
<dbReference type="TreeFam" id="TF318389"/>
<dbReference type="Reactome" id="R-MMU-211945">
    <property type="pathway name" value="Phase I - Functionalization of compounds"/>
</dbReference>
<dbReference type="BioGRID-ORCS" id="68021">
    <property type="hits" value="2 hits in 77 CRISPR screens"/>
</dbReference>
<dbReference type="ChiTaRS" id="Bphl">
    <property type="organism name" value="mouse"/>
</dbReference>
<dbReference type="PRO" id="PR:Q8R164"/>
<dbReference type="Proteomes" id="UP000000589">
    <property type="component" value="Chromosome 13"/>
</dbReference>
<dbReference type="RNAct" id="Q8R164">
    <property type="molecule type" value="protein"/>
</dbReference>
<dbReference type="Bgee" id="ENSMUSG00000038286">
    <property type="expression patterns" value="Expressed in floor plate of midbrain and 269 other cell types or tissues"/>
</dbReference>
<dbReference type="ExpressionAtlas" id="Q8R164">
    <property type="expression patterns" value="baseline and differential"/>
</dbReference>
<dbReference type="GO" id="GO:0005739">
    <property type="term" value="C:mitochondrion"/>
    <property type="evidence" value="ECO:0000314"/>
    <property type="project" value="UniProtKB"/>
</dbReference>
<dbReference type="GO" id="GO:0047658">
    <property type="term" value="F:alpha-amino-acid esterase activity"/>
    <property type="evidence" value="ECO:0000250"/>
    <property type="project" value="UniProtKB"/>
</dbReference>
<dbReference type="GO" id="GO:0017171">
    <property type="term" value="F:serine hydrolase activity"/>
    <property type="evidence" value="ECO:0000250"/>
    <property type="project" value="UniProtKB"/>
</dbReference>
<dbReference type="GO" id="GO:0050667">
    <property type="term" value="P:homocysteine metabolic process"/>
    <property type="evidence" value="ECO:0000250"/>
    <property type="project" value="UniProtKB"/>
</dbReference>
<dbReference type="Gene3D" id="3.40.50.1820">
    <property type="entry name" value="alpha/beta hydrolase"/>
    <property type="match status" value="1"/>
</dbReference>
<dbReference type="InterPro" id="IPR000073">
    <property type="entry name" value="AB_hydrolase_1"/>
</dbReference>
<dbReference type="InterPro" id="IPR029058">
    <property type="entry name" value="AB_hydrolase_fold"/>
</dbReference>
<dbReference type="PANTHER" id="PTHR46331">
    <property type="entry name" value="VALACYCLOVIR HYDROLASE"/>
    <property type="match status" value="1"/>
</dbReference>
<dbReference type="PANTHER" id="PTHR46331:SF2">
    <property type="entry name" value="VALACYCLOVIR HYDROLASE"/>
    <property type="match status" value="1"/>
</dbReference>
<dbReference type="Pfam" id="PF00561">
    <property type="entry name" value="Abhydrolase_1"/>
    <property type="match status" value="1"/>
</dbReference>
<dbReference type="SUPFAM" id="SSF53474">
    <property type="entry name" value="alpha/beta-Hydrolases"/>
    <property type="match status" value="1"/>
</dbReference>
<dbReference type="PROSITE" id="PS00120">
    <property type="entry name" value="LIPASE_SER"/>
    <property type="match status" value="1"/>
</dbReference>
<name>BPHL_MOUSE</name>